<protein>
    <recommendedName>
        <fullName>Uncharacterized protein YxaC</fullName>
    </recommendedName>
</protein>
<gene>
    <name type="primary">yxaC</name>
    <name type="ordered locus">BSU40020</name>
    <name type="ORF">S14CR</name>
</gene>
<feature type="chain" id="PRO_0000049998" description="Uncharacterized protein YxaC">
    <location>
        <begin position="1"/>
        <end position="230"/>
    </location>
</feature>
<feature type="transmembrane region" description="Helical" evidence="1">
    <location>
        <begin position="4"/>
        <end position="24"/>
    </location>
</feature>
<feature type="transmembrane region" description="Helical" evidence="1">
    <location>
        <begin position="30"/>
        <end position="50"/>
    </location>
</feature>
<feature type="transmembrane region" description="Helical" evidence="1">
    <location>
        <begin position="67"/>
        <end position="87"/>
    </location>
</feature>
<feature type="transmembrane region" description="Helical" evidence="1">
    <location>
        <begin position="91"/>
        <end position="111"/>
    </location>
</feature>
<feature type="transmembrane region" description="Helical" evidence="1">
    <location>
        <begin position="148"/>
        <end position="168"/>
    </location>
</feature>
<feature type="transmembrane region" description="Helical" evidence="1">
    <location>
        <begin position="210"/>
        <end position="230"/>
    </location>
</feature>
<comment type="subcellular location">
    <subcellularLocation>
        <location evidence="2">Cell membrane</location>
        <topology evidence="2">Multi-pass membrane protein</topology>
    </subcellularLocation>
</comment>
<comment type="similarity">
    <text evidence="2">Belongs to the YohK (E.coli)/YwbG (IPA-22R) (B.subtilis) family.</text>
</comment>
<comment type="sequence caution" evidence="2">
    <conflict type="erroneous initiation">
        <sequence resource="EMBL-CDS" id="BAA21582"/>
    </conflict>
    <text>Extended N-terminus.</text>
</comment>
<comment type="sequence caution" evidence="2">
    <conflict type="erroneous termination">
        <sequence resource="EMBL-CDS" id="BAA21582"/>
    </conflict>
    <text>Extended C-terminus.</text>
</comment>
<evidence type="ECO:0000255" key="1"/>
<evidence type="ECO:0000305" key="2"/>
<sequence length="230" mass="24503">MQQACIAIIIILLTVAAYLAMVKLYKRFPLPFLIPVLTTTILIVAALMMFHVSYEGYMIGGKWINSLLGPAVVALAYPLYKQWHIIVKHCVPILGGVLVGLCMGMISGLIFAEAFGIDHDLLLSILPKSITTPVAIQIAAGLGGVPSMTVVFVMIAGFSGVILGPLFLKWLRIRSSLGQGIALGSASHALGTSKALEYGELAVSMSSVSMTLCAVLGSFFGPLVVWLFHI</sequence>
<proteinExistence type="inferred from homology"/>
<dbReference type="EMBL" id="AB005554">
    <property type="protein sequence ID" value="BAA21582.1"/>
    <property type="status" value="ALT_SEQ"/>
    <property type="molecule type" value="Genomic_DNA"/>
</dbReference>
<dbReference type="EMBL" id="AL009126">
    <property type="protein sequence ID" value="CAB16039.3"/>
    <property type="molecule type" value="Genomic_DNA"/>
</dbReference>
<dbReference type="PIR" id="C70071">
    <property type="entry name" value="C70071"/>
</dbReference>
<dbReference type="RefSeq" id="NP_391882.3">
    <property type="nucleotide sequence ID" value="NC_000964.3"/>
</dbReference>
<dbReference type="RefSeq" id="WP_003227015.1">
    <property type="nucleotide sequence ID" value="NZ_OZ025638.1"/>
</dbReference>
<dbReference type="FunCoup" id="P42102">
    <property type="interactions" value="32"/>
</dbReference>
<dbReference type="STRING" id="224308.BSU40022"/>
<dbReference type="TCDB" id="2.A.122.1.7">
    <property type="family name" value="the lrgb/cidb holin-like glycolate/glycerate transporter (lrgb/cidb/ggt) family"/>
</dbReference>
<dbReference type="PaxDb" id="224308-BSU40022"/>
<dbReference type="EnsemblBacteria" id="CAB16039">
    <property type="protein sequence ID" value="CAB16039"/>
    <property type="gene ID" value="BSU_40022"/>
</dbReference>
<dbReference type="GeneID" id="937696"/>
<dbReference type="KEGG" id="bsu:BSU40022"/>
<dbReference type="PATRIC" id="fig|224308.179.peg.4329"/>
<dbReference type="eggNOG" id="COG1346">
    <property type="taxonomic scope" value="Bacteria"/>
</dbReference>
<dbReference type="InParanoid" id="P42102"/>
<dbReference type="OrthoDB" id="9811701at2"/>
<dbReference type="PhylomeDB" id="P42102"/>
<dbReference type="BioCyc" id="BSUB:BSU40022-MONOMER"/>
<dbReference type="Proteomes" id="UP000001570">
    <property type="component" value="Chromosome"/>
</dbReference>
<dbReference type="GO" id="GO:0005886">
    <property type="term" value="C:plasma membrane"/>
    <property type="evidence" value="ECO:0007669"/>
    <property type="project" value="UniProtKB-SubCell"/>
</dbReference>
<dbReference type="InterPro" id="IPR007300">
    <property type="entry name" value="CidB/LrgB"/>
</dbReference>
<dbReference type="PANTHER" id="PTHR30249:SF17">
    <property type="entry name" value="HOLIN-LIKE PROTEIN CIDB"/>
    <property type="match status" value="1"/>
</dbReference>
<dbReference type="PANTHER" id="PTHR30249">
    <property type="entry name" value="PUTATIVE SEROTONIN TRANSPORTER"/>
    <property type="match status" value="1"/>
</dbReference>
<dbReference type="Pfam" id="PF04172">
    <property type="entry name" value="LrgB"/>
    <property type="match status" value="1"/>
</dbReference>
<accession>P42102</accession>
<keyword id="KW-1003">Cell membrane</keyword>
<keyword id="KW-0472">Membrane</keyword>
<keyword id="KW-1185">Reference proteome</keyword>
<keyword id="KW-0812">Transmembrane</keyword>
<keyword id="KW-1133">Transmembrane helix</keyword>
<name>YXAC_BACSU</name>
<reference key="1">
    <citation type="journal article" date="1995" name="DNA Res.">
        <title>Cloning and sequencing of a 36-kb region of the Bacillus subtilis genome between the gnt and iol operons.</title>
        <authorList>
            <person name="Yoshida K."/>
            <person name="Seki S."/>
            <person name="Fujimura M."/>
            <person name="Miwa Y."/>
            <person name="Fujita Y."/>
        </authorList>
    </citation>
    <scope>NUCLEOTIDE SEQUENCE [GENOMIC DNA]</scope>
    <source>
        <strain>168 / BGSC1A1</strain>
    </source>
</reference>
<reference key="2">
    <citation type="journal article" date="1997" name="Nature">
        <title>The complete genome sequence of the Gram-positive bacterium Bacillus subtilis.</title>
        <authorList>
            <person name="Kunst F."/>
            <person name="Ogasawara N."/>
            <person name="Moszer I."/>
            <person name="Albertini A.M."/>
            <person name="Alloni G."/>
            <person name="Azevedo V."/>
            <person name="Bertero M.G."/>
            <person name="Bessieres P."/>
            <person name="Bolotin A."/>
            <person name="Borchert S."/>
            <person name="Borriss R."/>
            <person name="Boursier L."/>
            <person name="Brans A."/>
            <person name="Braun M."/>
            <person name="Brignell S.C."/>
            <person name="Bron S."/>
            <person name="Brouillet S."/>
            <person name="Bruschi C.V."/>
            <person name="Caldwell B."/>
            <person name="Capuano V."/>
            <person name="Carter N.M."/>
            <person name="Choi S.-K."/>
            <person name="Codani J.-J."/>
            <person name="Connerton I.F."/>
            <person name="Cummings N.J."/>
            <person name="Daniel R.A."/>
            <person name="Denizot F."/>
            <person name="Devine K.M."/>
            <person name="Duesterhoeft A."/>
            <person name="Ehrlich S.D."/>
            <person name="Emmerson P.T."/>
            <person name="Entian K.-D."/>
            <person name="Errington J."/>
            <person name="Fabret C."/>
            <person name="Ferrari E."/>
            <person name="Foulger D."/>
            <person name="Fritz C."/>
            <person name="Fujita M."/>
            <person name="Fujita Y."/>
            <person name="Fuma S."/>
            <person name="Galizzi A."/>
            <person name="Galleron N."/>
            <person name="Ghim S.-Y."/>
            <person name="Glaser P."/>
            <person name="Goffeau A."/>
            <person name="Golightly E.J."/>
            <person name="Grandi G."/>
            <person name="Guiseppi G."/>
            <person name="Guy B.J."/>
            <person name="Haga K."/>
            <person name="Haiech J."/>
            <person name="Harwood C.R."/>
            <person name="Henaut A."/>
            <person name="Hilbert H."/>
            <person name="Holsappel S."/>
            <person name="Hosono S."/>
            <person name="Hullo M.-F."/>
            <person name="Itaya M."/>
            <person name="Jones L.-M."/>
            <person name="Joris B."/>
            <person name="Karamata D."/>
            <person name="Kasahara Y."/>
            <person name="Klaerr-Blanchard M."/>
            <person name="Klein C."/>
            <person name="Kobayashi Y."/>
            <person name="Koetter P."/>
            <person name="Koningstein G."/>
            <person name="Krogh S."/>
            <person name="Kumano M."/>
            <person name="Kurita K."/>
            <person name="Lapidus A."/>
            <person name="Lardinois S."/>
            <person name="Lauber J."/>
            <person name="Lazarevic V."/>
            <person name="Lee S.-M."/>
            <person name="Levine A."/>
            <person name="Liu H."/>
            <person name="Masuda S."/>
            <person name="Mauel C."/>
            <person name="Medigue C."/>
            <person name="Medina N."/>
            <person name="Mellado R.P."/>
            <person name="Mizuno M."/>
            <person name="Moestl D."/>
            <person name="Nakai S."/>
            <person name="Noback M."/>
            <person name="Noone D."/>
            <person name="O'Reilly M."/>
            <person name="Ogawa K."/>
            <person name="Ogiwara A."/>
            <person name="Oudega B."/>
            <person name="Park S.-H."/>
            <person name="Parro V."/>
            <person name="Pohl T.M."/>
            <person name="Portetelle D."/>
            <person name="Porwollik S."/>
            <person name="Prescott A.M."/>
            <person name="Presecan E."/>
            <person name="Pujic P."/>
            <person name="Purnelle B."/>
            <person name="Rapoport G."/>
            <person name="Rey M."/>
            <person name="Reynolds S."/>
            <person name="Rieger M."/>
            <person name="Rivolta C."/>
            <person name="Rocha E."/>
            <person name="Roche B."/>
            <person name="Rose M."/>
            <person name="Sadaie Y."/>
            <person name="Sato T."/>
            <person name="Scanlan E."/>
            <person name="Schleich S."/>
            <person name="Schroeter R."/>
            <person name="Scoffone F."/>
            <person name="Sekiguchi J."/>
            <person name="Sekowska A."/>
            <person name="Seror S.J."/>
            <person name="Serror P."/>
            <person name="Shin B.-S."/>
            <person name="Soldo B."/>
            <person name="Sorokin A."/>
            <person name="Tacconi E."/>
            <person name="Takagi T."/>
            <person name="Takahashi H."/>
            <person name="Takemaru K."/>
            <person name="Takeuchi M."/>
            <person name="Tamakoshi A."/>
            <person name="Tanaka T."/>
            <person name="Terpstra P."/>
            <person name="Tognoni A."/>
            <person name="Tosato V."/>
            <person name="Uchiyama S."/>
            <person name="Vandenbol M."/>
            <person name="Vannier F."/>
            <person name="Vassarotti A."/>
            <person name="Viari A."/>
            <person name="Wambutt R."/>
            <person name="Wedler E."/>
            <person name="Wedler H."/>
            <person name="Weitzenegger T."/>
            <person name="Winters P."/>
            <person name="Wipat A."/>
            <person name="Yamamoto H."/>
            <person name="Yamane K."/>
            <person name="Yasumoto K."/>
            <person name="Yata K."/>
            <person name="Yoshida K."/>
            <person name="Yoshikawa H.-F."/>
            <person name="Zumstein E."/>
            <person name="Yoshikawa H."/>
            <person name="Danchin A."/>
        </authorList>
    </citation>
    <scope>NUCLEOTIDE SEQUENCE [LARGE SCALE GENOMIC DNA]</scope>
    <source>
        <strain>168</strain>
    </source>
</reference>
<reference key="3">
    <citation type="journal article" date="1999" name="Genome Res.">
        <title>Detecting and analyzing DNA sequencing errors: toward a higher quality of the Bacillus subtilis genome sequence.</title>
        <authorList>
            <person name="Medigue C."/>
            <person name="Rose M."/>
            <person name="Viari A."/>
            <person name="Danchin A."/>
        </authorList>
    </citation>
    <scope>SEQUENCE REVISION</scope>
</reference>
<reference key="4">
    <citation type="journal article" date="2009" name="Microbiology">
        <title>From a consortium sequence to a unified sequence: the Bacillus subtilis 168 reference genome a decade later.</title>
        <authorList>
            <person name="Barbe V."/>
            <person name="Cruveiller S."/>
            <person name="Kunst F."/>
            <person name="Lenoble P."/>
            <person name="Meurice G."/>
            <person name="Sekowska A."/>
            <person name="Vallenet D."/>
            <person name="Wang T."/>
            <person name="Moszer I."/>
            <person name="Medigue C."/>
            <person name="Danchin A."/>
        </authorList>
    </citation>
    <scope>SEQUENCE REVISION TO 171 AND 187</scope>
</reference>
<organism>
    <name type="scientific">Bacillus subtilis (strain 168)</name>
    <dbReference type="NCBI Taxonomy" id="224308"/>
    <lineage>
        <taxon>Bacteria</taxon>
        <taxon>Bacillati</taxon>
        <taxon>Bacillota</taxon>
        <taxon>Bacilli</taxon>
        <taxon>Bacillales</taxon>
        <taxon>Bacillaceae</taxon>
        <taxon>Bacillus</taxon>
    </lineage>
</organism>